<feature type="chain" id="PRO_0000301755" description="DNA mismatch repair protein HSM3">
    <location>
        <begin position="1"/>
        <end position="475"/>
    </location>
</feature>
<evidence type="ECO:0000250" key="1"/>
<evidence type="ECO:0000305" key="2"/>
<name>HSM3_EREGS</name>
<proteinExistence type="inferred from homology"/>
<organism>
    <name type="scientific">Eremothecium gossypii (strain ATCC 10895 / CBS 109.51 / FGSC 9923 / NRRL Y-1056)</name>
    <name type="common">Yeast</name>
    <name type="synonym">Ashbya gossypii</name>
    <dbReference type="NCBI Taxonomy" id="284811"/>
    <lineage>
        <taxon>Eukaryota</taxon>
        <taxon>Fungi</taxon>
        <taxon>Dikarya</taxon>
        <taxon>Ascomycota</taxon>
        <taxon>Saccharomycotina</taxon>
        <taxon>Saccharomycetes</taxon>
        <taxon>Saccharomycetales</taxon>
        <taxon>Saccharomycetaceae</taxon>
        <taxon>Eremothecium</taxon>
    </lineage>
</organism>
<reference key="1">
    <citation type="journal article" date="2004" name="Science">
        <title>The Ashbya gossypii genome as a tool for mapping the ancient Saccharomyces cerevisiae genome.</title>
        <authorList>
            <person name="Dietrich F.S."/>
            <person name="Voegeli S."/>
            <person name="Brachat S."/>
            <person name="Lerch A."/>
            <person name="Gates K."/>
            <person name="Steiner S."/>
            <person name="Mohr C."/>
            <person name="Poehlmann R."/>
            <person name="Luedi P."/>
            <person name="Choi S."/>
            <person name="Wing R.A."/>
            <person name="Flavier A."/>
            <person name="Gaffney T.D."/>
            <person name="Philippsen P."/>
        </authorList>
    </citation>
    <scope>NUCLEOTIDE SEQUENCE [LARGE SCALE GENOMIC DNA]</scope>
    <source>
        <strain>ATCC 10895 / CBS 109.51 / FGSC 9923 / NRRL Y-1056</strain>
    </source>
</reference>
<reference key="2">
    <citation type="journal article" date="2013" name="G3 (Bethesda)">
        <title>Genomes of Ashbya fungi isolated from insects reveal four mating-type loci, numerous translocations, lack of transposons, and distinct gene duplications.</title>
        <authorList>
            <person name="Dietrich F.S."/>
            <person name="Voegeli S."/>
            <person name="Kuo S."/>
            <person name="Philippsen P."/>
        </authorList>
    </citation>
    <scope>GENOME REANNOTATION</scope>
    <source>
        <strain>ATCC 10895 / CBS 109.51 / FGSC 9923 / NRRL Y-1056</strain>
    </source>
</reference>
<comment type="function">
    <text evidence="1">Involved in DNA mismatch repair in slow-growing cells. Acts as a chaperone during the assembly of the 26S proteasome, specifically of the base subcomplex of the 19S regulatory complex (RC) (By similarity).</text>
</comment>
<comment type="subcellular location">
    <subcellularLocation>
        <location evidence="1">Cytoplasm</location>
    </subcellularLocation>
</comment>
<comment type="similarity">
    <text evidence="2">Belongs to the proteasome subunit S5B/HSM3 family.</text>
</comment>
<sequence length="475" mass="54462">MEEWRIQDRMSQLADVLEAPEEHGVGSVNGLVDMLQLDLGVMVRLDADARPLLSAMKKVLTAGEMSGLDYSGLLSLLDTVVKLAPFETVLEVFSVEDIITALESDDQLVRTSCKVLAVSHPKDLFSTTRIMDVLLQLYFSQRTVPVNAVEDVFQSLCTDGLIRRRILENNYPLLREMRSTHDAILFSRYLVLMTILFRHIDRSEFQKELFVPTTEEVLDSLKKDIFLFINVAKYYRALLEYATDPGAAGGPRDWALSYILPVLHAFGHIYENKEKYIEVHSYARAYLFQLLRTVSYLEDMEVFRELDVKYLHISGDNPDVMHFMAIFNPMYLYRHHFDLLTSQVTVKPSFLPVLKNIVSCQETFEILKPALTASAILIMPYSEQMVLLGQLSSYPHSTEYLVQELPKVMSNLICNENGPISEPETIELRKKVFENLLLYSATVLNVWYEPLLDEYTNICSGKTSFVRTEVVDMYL</sequence>
<accession>Q758E4</accession>
<gene>
    <name type="primary">HSM3</name>
    <name type="ordered locus">AEL182W</name>
</gene>
<dbReference type="EMBL" id="AE016818">
    <property type="protein sequence ID" value="AAS52503.1"/>
    <property type="molecule type" value="Genomic_DNA"/>
</dbReference>
<dbReference type="RefSeq" id="NP_984679.1">
    <property type="nucleotide sequence ID" value="NM_210032.1"/>
</dbReference>
<dbReference type="SMR" id="Q758E4"/>
<dbReference type="FunCoup" id="Q758E4">
    <property type="interactions" value="141"/>
</dbReference>
<dbReference type="STRING" id="284811.Q758E4"/>
<dbReference type="EnsemblFungi" id="AAS52503">
    <property type="protein sequence ID" value="AAS52503"/>
    <property type="gene ID" value="AGOS_AEL182W"/>
</dbReference>
<dbReference type="GeneID" id="4620864"/>
<dbReference type="KEGG" id="ago:AGOS_AEL182W"/>
<dbReference type="eggNOG" id="ENOG502QWEK">
    <property type="taxonomic scope" value="Eukaryota"/>
</dbReference>
<dbReference type="HOGENOM" id="CLU_044760_0_0_1"/>
<dbReference type="InParanoid" id="Q758E4"/>
<dbReference type="OMA" id="YMEQMVL"/>
<dbReference type="OrthoDB" id="4074002at2759"/>
<dbReference type="Proteomes" id="UP000000591">
    <property type="component" value="Chromosome V"/>
</dbReference>
<dbReference type="GO" id="GO:0005829">
    <property type="term" value="C:cytosol"/>
    <property type="evidence" value="ECO:0007669"/>
    <property type="project" value="EnsemblFungi"/>
</dbReference>
<dbReference type="GO" id="GO:0005634">
    <property type="term" value="C:nucleus"/>
    <property type="evidence" value="ECO:0007669"/>
    <property type="project" value="EnsemblFungi"/>
</dbReference>
<dbReference type="GO" id="GO:0044183">
    <property type="term" value="F:protein folding chaperone"/>
    <property type="evidence" value="ECO:0007669"/>
    <property type="project" value="EnsemblFungi"/>
</dbReference>
<dbReference type="GO" id="GO:0006298">
    <property type="term" value="P:mismatch repair"/>
    <property type="evidence" value="ECO:0007669"/>
    <property type="project" value="EnsemblFungi"/>
</dbReference>
<dbReference type="GO" id="GO:0070682">
    <property type="term" value="P:proteasome regulatory particle assembly"/>
    <property type="evidence" value="ECO:0007669"/>
    <property type="project" value="EnsemblFungi"/>
</dbReference>
<dbReference type="CDD" id="cd12794">
    <property type="entry name" value="Hsm3_like"/>
    <property type="match status" value="1"/>
</dbReference>
<dbReference type="Gene3D" id="1.25.10.50">
    <property type="match status" value="1"/>
</dbReference>
<dbReference type="Gene3D" id="1.25.40.580">
    <property type="match status" value="1"/>
</dbReference>
<dbReference type="InterPro" id="IPR040752">
    <property type="entry name" value="HSM3_C"/>
</dbReference>
<dbReference type="InterPro" id="IPR041335">
    <property type="entry name" value="HSM3_N"/>
</dbReference>
<dbReference type="Pfam" id="PF18794">
    <property type="entry name" value="HSM3_C"/>
    <property type="match status" value="1"/>
</dbReference>
<dbReference type="Pfam" id="PF18795">
    <property type="entry name" value="HSM3_N"/>
    <property type="match status" value="1"/>
</dbReference>
<protein>
    <recommendedName>
        <fullName>DNA mismatch repair protein HSM3</fullName>
    </recommendedName>
</protein>
<keyword id="KW-0143">Chaperone</keyword>
<keyword id="KW-0963">Cytoplasm</keyword>
<keyword id="KW-0227">DNA damage</keyword>
<keyword id="KW-0234">DNA repair</keyword>
<keyword id="KW-1185">Reference proteome</keyword>